<evidence type="ECO:0000255" key="1">
    <source>
        <dbReference type="HAMAP-Rule" id="MF_00172"/>
    </source>
</evidence>
<name>METE_BACC0</name>
<gene>
    <name evidence="1" type="primary">metE</name>
    <name type="ordered locus">BCAH820_4021</name>
</gene>
<reference key="1">
    <citation type="submission" date="2008-10" db="EMBL/GenBank/DDBJ databases">
        <title>Genome sequence of Bacillus cereus AH820.</title>
        <authorList>
            <person name="Dodson R.J."/>
            <person name="Durkin A.S."/>
            <person name="Rosovitz M.J."/>
            <person name="Rasko D.A."/>
            <person name="Hoffmaster A."/>
            <person name="Ravel J."/>
            <person name="Sutton G."/>
        </authorList>
    </citation>
    <scope>NUCLEOTIDE SEQUENCE [LARGE SCALE GENOMIC DNA]</scope>
    <source>
        <strain>AH820</strain>
    </source>
</reference>
<organism>
    <name type="scientific">Bacillus cereus (strain AH820)</name>
    <dbReference type="NCBI Taxonomy" id="405535"/>
    <lineage>
        <taxon>Bacteria</taxon>
        <taxon>Bacillati</taxon>
        <taxon>Bacillota</taxon>
        <taxon>Bacilli</taxon>
        <taxon>Bacillales</taxon>
        <taxon>Bacillaceae</taxon>
        <taxon>Bacillus</taxon>
        <taxon>Bacillus cereus group</taxon>
    </lineage>
</organism>
<sequence>MAIQTSNLGYPRIGLQREWKKTLEAFWSNKINEEQFLTTMKEIRLQHVKVQQEKGIELIPIGDFTYYDHVLDTAYMLGFIPSRFSEFTSYLDVYFAMARGSKDHVASEMTKWFNTNYHYIVPEYEEGLQISLKDNRPLRLYEEAKQELGVDGKPVILGPYTFLKLAKGYTQEQFATILKQLVAPYVQLLSELHAAGAQIIQVDEPIFASLTKEEVQQAKEIYEAIRKEVPNATLLLQTYFDSVEENYEEIITFPVSSIGLDFVHGKEGNLNAISKYGFPADKTLAVGCIDGRNIWRADLDEVLTLFTTLQKQVQTKDLIVQPSCSLLHTPIDKTEETHLSTELFDALAFANQKLEELVLTHSALTQGTESISNELETYRNVHHTIRSSAARNREDVKAARTALKEEDFSRPLPFEKRYELQQVALKLPLLPTTTIGSFPQTTEVRQTRKEWRNGIISNEQYEQFIEKETEKWIRYQEEIGLDVLVHGEFERTDMVEYFGERLAGFSFTKNGWVQSYGSRCVKPPVIYGDVAFINGMTIKETVYAQSLTEKVVKGMLTGPVTILNWSFVRNDIPRKEVSYQIALALRHEIELLESSGIRVIQVDEPALREGMPLKEKDWDAYITWAVQSFLLATSSVANETQIHTHMCYSNFEDIVDAIRALDADVISIETSRSHGEFIDTLKHTTYEKGIGLGVYDIHSPRVPSKDEMYKIVEQSLQVCDPKYFWINPDCGLKTRRTEEVIPALEHMVQAAKDARSLLKTNA</sequence>
<proteinExistence type="inferred from homology"/>
<dbReference type="EC" id="2.1.1.14" evidence="1"/>
<dbReference type="EMBL" id="CP001283">
    <property type="protein sequence ID" value="ACK90843.1"/>
    <property type="molecule type" value="Genomic_DNA"/>
</dbReference>
<dbReference type="RefSeq" id="WP_001007636.1">
    <property type="nucleotide sequence ID" value="NC_011773.1"/>
</dbReference>
<dbReference type="SMR" id="B7JKY0"/>
<dbReference type="KEGG" id="bcu:BCAH820_4021"/>
<dbReference type="HOGENOM" id="CLU_013175_0_0_9"/>
<dbReference type="UniPathway" id="UPA00051">
    <property type="reaction ID" value="UER00082"/>
</dbReference>
<dbReference type="Proteomes" id="UP000001363">
    <property type="component" value="Chromosome"/>
</dbReference>
<dbReference type="GO" id="GO:0003871">
    <property type="term" value="F:5-methyltetrahydropteroyltriglutamate-homocysteine S-methyltransferase activity"/>
    <property type="evidence" value="ECO:0007669"/>
    <property type="project" value="UniProtKB-UniRule"/>
</dbReference>
<dbReference type="GO" id="GO:0008270">
    <property type="term" value="F:zinc ion binding"/>
    <property type="evidence" value="ECO:0007669"/>
    <property type="project" value="InterPro"/>
</dbReference>
<dbReference type="GO" id="GO:0009086">
    <property type="term" value="P:methionine biosynthetic process"/>
    <property type="evidence" value="ECO:0007669"/>
    <property type="project" value="UniProtKB-UniRule"/>
</dbReference>
<dbReference type="GO" id="GO:0032259">
    <property type="term" value="P:methylation"/>
    <property type="evidence" value="ECO:0007669"/>
    <property type="project" value="UniProtKB-KW"/>
</dbReference>
<dbReference type="CDD" id="cd03311">
    <property type="entry name" value="CIMS_C_terminal_like"/>
    <property type="match status" value="1"/>
</dbReference>
<dbReference type="CDD" id="cd03312">
    <property type="entry name" value="CIMS_N_terminal_like"/>
    <property type="match status" value="1"/>
</dbReference>
<dbReference type="Gene3D" id="3.20.20.210">
    <property type="match status" value="2"/>
</dbReference>
<dbReference type="HAMAP" id="MF_00172">
    <property type="entry name" value="Meth_synth"/>
    <property type="match status" value="1"/>
</dbReference>
<dbReference type="InterPro" id="IPR013215">
    <property type="entry name" value="Cbl-indep_Met_Synth_N"/>
</dbReference>
<dbReference type="InterPro" id="IPR006276">
    <property type="entry name" value="Cobalamin-indep_Met_synthase"/>
</dbReference>
<dbReference type="InterPro" id="IPR002629">
    <property type="entry name" value="Met_Synth_C/arc"/>
</dbReference>
<dbReference type="InterPro" id="IPR038071">
    <property type="entry name" value="UROD/MetE-like_sf"/>
</dbReference>
<dbReference type="NCBIfam" id="TIGR01371">
    <property type="entry name" value="met_syn_B12ind"/>
    <property type="match status" value="1"/>
</dbReference>
<dbReference type="NCBIfam" id="NF003556">
    <property type="entry name" value="PRK05222.1"/>
    <property type="match status" value="1"/>
</dbReference>
<dbReference type="PANTHER" id="PTHR30519">
    <property type="entry name" value="5-METHYLTETRAHYDROPTEROYLTRIGLUTAMATE--HOMOCYSTEINE METHYLTRANSFERASE"/>
    <property type="match status" value="1"/>
</dbReference>
<dbReference type="Pfam" id="PF08267">
    <property type="entry name" value="Meth_synt_1"/>
    <property type="match status" value="1"/>
</dbReference>
<dbReference type="Pfam" id="PF01717">
    <property type="entry name" value="Meth_synt_2"/>
    <property type="match status" value="1"/>
</dbReference>
<dbReference type="PIRSF" id="PIRSF000382">
    <property type="entry name" value="MeTrfase_B12_ind"/>
    <property type="match status" value="1"/>
</dbReference>
<dbReference type="SUPFAM" id="SSF51726">
    <property type="entry name" value="UROD/MetE-like"/>
    <property type="match status" value="2"/>
</dbReference>
<keyword id="KW-0028">Amino-acid biosynthesis</keyword>
<keyword id="KW-0479">Metal-binding</keyword>
<keyword id="KW-0486">Methionine biosynthesis</keyword>
<keyword id="KW-0489">Methyltransferase</keyword>
<keyword id="KW-0677">Repeat</keyword>
<keyword id="KW-0808">Transferase</keyword>
<keyword id="KW-0862">Zinc</keyword>
<accession>B7JKY0</accession>
<protein>
    <recommendedName>
        <fullName evidence="1">5-methyltetrahydropteroyltriglutamate--homocysteine methyltransferase</fullName>
        <ecNumber evidence="1">2.1.1.14</ecNumber>
    </recommendedName>
    <alternativeName>
        <fullName evidence="1">Cobalamin-independent methionine synthase</fullName>
    </alternativeName>
    <alternativeName>
        <fullName evidence="1">Methionine synthase, vitamin-B12 independent isozyme</fullName>
    </alternativeName>
</protein>
<feature type="chain" id="PRO_1000191193" description="5-methyltetrahydropteroyltriglutamate--homocysteine methyltransferase">
    <location>
        <begin position="1"/>
        <end position="762"/>
    </location>
</feature>
<feature type="active site" description="Proton donor" evidence="1">
    <location>
        <position position="698"/>
    </location>
</feature>
<feature type="binding site" evidence="1">
    <location>
        <begin position="17"/>
        <end position="20"/>
    </location>
    <ligand>
        <name>5-methyltetrahydropteroyltri-L-glutamate</name>
        <dbReference type="ChEBI" id="CHEBI:58207"/>
    </ligand>
</feature>
<feature type="binding site" evidence="1">
    <location>
        <position position="111"/>
    </location>
    <ligand>
        <name>5-methyltetrahydropteroyltri-L-glutamate</name>
        <dbReference type="ChEBI" id="CHEBI:58207"/>
    </ligand>
</feature>
<feature type="binding site" evidence="1">
    <location>
        <begin position="435"/>
        <end position="437"/>
    </location>
    <ligand>
        <name>L-homocysteine</name>
        <dbReference type="ChEBI" id="CHEBI:58199"/>
    </ligand>
</feature>
<feature type="binding site" evidence="1">
    <location>
        <begin position="435"/>
        <end position="437"/>
    </location>
    <ligand>
        <name>L-methionine</name>
        <dbReference type="ChEBI" id="CHEBI:57844"/>
    </ligand>
</feature>
<feature type="binding site" evidence="1">
    <location>
        <position position="488"/>
    </location>
    <ligand>
        <name>L-homocysteine</name>
        <dbReference type="ChEBI" id="CHEBI:58199"/>
    </ligand>
</feature>
<feature type="binding site" evidence="1">
    <location>
        <position position="488"/>
    </location>
    <ligand>
        <name>L-methionine</name>
        <dbReference type="ChEBI" id="CHEBI:57844"/>
    </ligand>
</feature>
<feature type="binding site" evidence="1">
    <location>
        <begin position="519"/>
        <end position="520"/>
    </location>
    <ligand>
        <name>5-methyltetrahydropteroyltri-L-glutamate</name>
        <dbReference type="ChEBI" id="CHEBI:58207"/>
    </ligand>
</feature>
<feature type="binding site" evidence="1">
    <location>
        <position position="565"/>
    </location>
    <ligand>
        <name>5-methyltetrahydropteroyltri-L-glutamate</name>
        <dbReference type="ChEBI" id="CHEBI:58207"/>
    </ligand>
</feature>
<feature type="binding site" evidence="1">
    <location>
        <position position="603"/>
    </location>
    <ligand>
        <name>L-homocysteine</name>
        <dbReference type="ChEBI" id="CHEBI:58199"/>
    </ligand>
</feature>
<feature type="binding site" evidence="1">
    <location>
        <position position="603"/>
    </location>
    <ligand>
        <name>L-methionine</name>
        <dbReference type="ChEBI" id="CHEBI:57844"/>
    </ligand>
</feature>
<feature type="binding site" evidence="1">
    <location>
        <position position="609"/>
    </location>
    <ligand>
        <name>5-methyltetrahydropteroyltri-L-glutamate</name>
        <dbReference type="ChEBI" id="CHEBI:58207"/>
    </ligand>
</feature>
<feature type="binding site" evidence="1">
    <location>
        <position position="645"/>
    </location>
    <ligand>
        <name>Zn(2+)</name>
        <dbReference type="ChEBI" id="CHEBI:29105"/>
        <note>catalytic</note>
    </ligand>
</feature>
<feature type="binding site" evidence="1">
    <location>
        <position position="647"/>
    </location>
    <ligand>
        <name>Zn(2+)</name>
        <dbReference type="ChEBI" id="CHEBI:29105"/>
        <note>catalytic</note>
    </ligand>
</feature>
<feature type="binding site" evidence="1">
    <location>
        <position position="669"/>
    </location>
    <ligand>
        <name>Zn(2+)</name>
        <dbReference type="ChEBI" id="CHEBI:29105"/>
        <note>catalytic</note>
    </ligand>
</feature>
<feature type="binding site" evidence="1">
    <location>
        <position position="730"/>
    </location>
    <ligand>
        <name>Zn(2+)</name>
        <dbReference type="ChEBI" id="CHEBI:29105"/>
        <note>catalytic</note>
    </ligand>
</feature>
<comment type="function">
    <text evidence="1">Catalyzes the transfer of a methyl group from 5-methyltetrahydrofolate to homocysteine resulting in methionine formation.</text>
</comment>
<comment type="catalytic activity">
    <reaction evidence="1">
        <text>5-methyltetrahydropteroyltri-L-glutamate + L-homocysteine = tetrahydropteroyltri-L-glutamate + L-methionine</text>
        <dbReference type="Rhea" id="RHEA:21196"/>
        <dbReference type="ChEBI" id="CHEBI:57844"/>
        <dbReference type="ChEBI" id="CHEBI:58140"/>
        <dbReference type="ChEBI" id="CHEBI:58199"/>
        <dbReference type="ChEBI" id="CHEBI:58207"/>
        <dbReference type="EC" id="2.1.1.14"/>
    </reaction>
</comment>
<comment type="cofactor">
    <cofactor evidence="1">
        <name>Zn(2+)</name>
        <dbReference type="ChEBI" id="CHEBI:29105"/>
    </cofactor>
    <text evidence="1">Binds 1 zinc ion per subunit.</text>
</comment>
<comment type="pathway">
    <text evidence="1">Amino-acid biosynthesis; L-methionine biosynthesis via de novo pathway; L-methionine from L-homocysteine (MetE route): step 1/1.</text>
</comment>
<comment type="similarity">
    <text evidence="1">Belongs to the vitamin-B12 independent methionine synthase family.</text>
</comment>